<proteinExistence type="inferred from homology"/>
<sequence length="327" mass="36626">MEAIKGSDVNVPDAVFAWMLDGRGGVKPLENTDVIDEAHPCWLHLNYVHHESAQWLATTPLLPNNVRDALAGESTRPRVSRLGEGTLITLRCINGSTDERPDQLVAMRVYMDGRLIVSTRQRKVLALDDVVSDLEEGTGPTDCGGWLVDVCDALTDHSSEFIEQLHDKIIDLEDNLLDQQIPPRGFLALLRKQLIVMRRYMAPQRDVYARLASERLPWMSDDQRRRMQDIADRLGRGLDEIDACIARTGVMADEIAQVMQENLARRTYTMSLMAMVFLPSTFLTGLFGVNLGGIPGGGWQFGFSIFCILLVVLIGGVALWLHRSKWL</sequence>
<accession>B7LYL2</accession>
<comment type="function">
    <text evidence="1">Zinc transporter. Acts as a Zn(2+):proton symporter, which likely mediates zinc ion uptake.</text>
</comment>
<comment type="catalytic activity">
    <reaction evidence="1">
        <text>Zn(2+)(out) + H(+)(out) = Zn(2+)(in) + H(+)(in)</text>
        <dbReference type="Rhea" id="RHEA:71195"/>
        <dbReference type="ChEBI" id="CHEBI:15378"/>
        <dbReference type="ChEBI" id="CHEBI:29105"/>
    </reaction>
    <physiologicalReaction direction="left-to-right" evidence="1">
        <dbReference type="Rhea" id="RHEA:71196"/>
    </physiologicalReaction>
</comment>
<comment type="subcellular location">
    <subcellularLocation>
        <location evidence="1">Cell inner membrane</location>
        <topology evidence="1">Multi-pass membrane protein</topology>
    </subcellularLocation>
</comment>
<comment type="similarity">
    <text evidence="1">Belongs to the CorA metal ion transporter (MIT) (TC 1.A.35) family.</text>
</comment>
<gene>
    <name evidence="1" type="primary">zntB</name>
    <name type="ordered locus">ECIAI1_1371</name>
</gene>
<reference key="1">
    <citation type="journal article" date="2009" name="PLoS Genet.">
        <title>Organised genome dynamics in the Escherichia coli species results in highly diverse adaptive paths.</title>
        <authorList>
            <person name="Touchon M."/>
            <person name="Hoede C."/>
            <person name="Tenaillon O."/>
            <person name="Barbe V."/>
            <person name="Baeriswyl S."/>
            <person name="Bidet P."/>
            <person name="Bingen E."/>
            <person name="Bonacorsi S."/>
            <person name="Bouchier C."/>
            <person name="Bouvet O."/>
            <person name="Calteau A."/>
            <person name="Chiapello H."/>
            <person name="Clermont O."/>
            <person name="Cruveiller S."/>
            <person name="Danchin A."/>
            <person name="Diard M."/>
            <person name="Dossat C."/>
            <person name="Karoui M.E."/>
            <person name="Frapy E."/>
            <person name="Garry L."/>
            <person name="Ghigo J.M."/>
            <person name="Gilles A.M."/>
            <person name="Johnson J."/>
            <person name="Le Bouguenec C."/>
            <person name="Lescat M."/>
            <person name="Mangenot S."/>
            <person name="Martinez-Jehanne V."/>
            <person name="Matic I."/>
            <person name="Nassif X."/>
            <person name="Oztas S."/>
            <person name="Petit M.A."/>
            <person name="Pichon C."/>
            <person name="Rouy Z."/>
            <person name="Ruf C.S."/>
            <person name="Schneider D."/>
            <person name="Tourret J."/>
            <person name="Vacherie B."/>
            <person name="Vallenet D."/>
            <person name="Medigue C."/>
            <person name="Rocha E.P.C."/>
            <person name="Denamur E."/>
        </authorList>
    </citation>
    <scope>NUCLEOTIDE SEQUENCE [LARGE SCALE GENOMIC DNA]</scope>
    <source>
        <strain>IAI1</strain>
    </source>
</reference>
<protein>
    <recommendedName>
        <fullName evidence="1">Zinc transport protein ZntB</fullName>
    </recommendedName>
</protein>
<feature type="chain" id="PRO_1000189721" description="Zinc transport protein ZntB">
    <location>
        <begin position="1"/>
        <end position="327"/>
    </location>
</feature>
<feature type="topological domain" description="Cytoplasmic" evidence="1">
    <location>
        <begin position="1"/>
        <end position="273"/>
    </location>
</feature>
<feature type="transmembrane region" description="Helical" evidence="1">
    <location>
        <begin position="274"/>
        <end position="294"/>
    </location>
</feature>
<feature type="topological domain" description="Periplasmic" evidence="1">
    <location>
        <begin position="295"/>
        <end position="300"/>
    </location>
</feature>
<feature type="transmembrane region" description="Helical" evidence="1">
    <location>
        <begin position="301"/>
        <end position="321"/>
    </location>
</feature>
<feature type="topological domain" description="Cytoplasmic" evidence="1">
    <location>
        <begin position="322"/>
        <end position="327"/>
    </location>
</feature>
<evidence type="ECO:0000255" key="1">
    <source>
        <dbReference type="HAMAP-Rule" id="MF_01565"/>
    </source>
</evidence>
<name>ZNTB_ECO8A</name>
<organism>
    <name type="scientific">Escherichia coli O8 (strain IAI1)</name>
    <dbReference type="NCBI Taxonomy" id="585034"/>
    <lineage>
        <taxon>Bacteria</taxon>
        <taxon>Pseudomonadati</taxon>
        <taxon>Pseudomonadota</taxon>
        <taxon>Gammaproteobacteria</taxon>
        <taxon>Enterobacterales</taxon>
        <taxon>Enterobacteriaceae</taxon>
        <taxon>Escherichia</taxon>
    </lineage>
</organism>
<dbReference type="EMBL" id="CU928160">
    <property type="protein sequence ID" value="CAQ98230.1"/>
    <property type="molecule type" value="Genomic_DNA"/>
</dbReference>
<dbReference type="RefSeq" id="WP_000387395.1">
    <property type="nucleotide sequence ID" value="NC_011741.1"/>
</dbReference>
<dbReference type="SMR" id="B7LYL2"/>
<dbReference type="GeneID" id="75203458"/>
<dbReference type="KEGG" id="ecr:ECIAI1_1371"/>
<dbReference type="HOGENOM" id="CLU_007127_2_0_6"/>
<dbReference type="GO" id="GO:0005886">
    <property type="term" value="C:plasma membrane"/>
    <property type="evidence" value="ECO:0007669"/>
    <property type="project" value="UniProtKB-SubCell"/>
</dbReference>
<dbReference type="GO" id="GO:0050897">
    <property type="term" value="F:cobalt ion binding"/>
    <property type="evidence" value="ECO:0007669"/>
    <property type="project" value="TreeGrafter"/>
</dbReference>
<dbReference type="GO" id="GO:0015087">
    <property type="term" value="F:cobalt ion transmembrane transporter activity"/>
    <property type="evidence" value="ECO:0007669"/>
    <property type="project" value="TreeGrafter"/>
</dbReference>
<dbReference type="GO" id="GO:0000287">
    <property type="term" value="F:magnesium ion binding"/>
    <property type="evidence" value="ECO:0007669"/>
    <property type="project" value="TreeGrafter"/>
</dbReference>
<dbReference type="GO" id="GO:0015095">
    <property type="term" value="F:magnesium ion transmembrane transporter activity"/>
    <property type="evidence" value="ECO:0007669"/>
    <property type="project" value="TreeGrafter"/>
</dbReference>
<dbReference type="GO" id="GO:0005385">
    <property type="term" value="F:zinc ion transmembrane transporter activity"/>
    <property type="evidence" value="ECO:0007669"/>
    <property type="project" value="UniProtKB-UniRule"/>
</dbReference>
<dbReference type="CDD" id="cd12833">
    <property type="entry name" value="ZntB-like_1"/>
    <property type="match status" value="1"/>
</dbReference>
<dbReference type="FunFam" id="1.20.58.340:FF:000002">
    <property type="entry name" value="Zinc transport protein ZntB"/>
    <property type="match status" value="1"/>
</dbReference>
<dbReference type="FunFam" id="1.20.58.340:FF:000003">
    <property type="entry name" value="Zinc transport protein ZntB"/>
    <property type="match status" value="1"/>
</dbReference>
<dbReference type="FunFam" id="3.30.460.20:FF:000001">
    <property type="entry name" value="Zinc transport protein ZntB"/>
    <property type="match status" value="1"/>
</dbReference>
<dbReference type="Gene3D" id="3.30.460.20">
    <property type="entry name" value="CorA soluble domain-like"/>
    <property type="match status" value="1"/>
</dbReference>
<dbReference type="Gene3D" id="1.20.58.340">
    <property type="entry name" value="Magnesium transport protein CorA, transmembrane region"/>
    <property type="match status" value="2"/>
</dbReference>
<dbReference type="HAMAP" id="MF_01565">
    <property type="entry name" value="ZntB"/>
    <property type="match status" value="1"/>
</dbReference>
<dbReference type="InterPro" id="IPR045861">
    <property type="entry name" value="CorA_cytoplasmic_dom"/>
</dbReference>
<dbReference type="InterPro" id="IPR045863">
    <property type="entry name" value="CorA_TM1_TM2"/>
</dbReference>
<dbReference type="InterPro" id="IPR002523">
    <property type="entry name" value="MgTranspt_CorA/ZnTranspt_ZntB"/>
</dbReference>
<dbReference type="InterPro" id="IPR023714">
    <property type="entry name" value="Zn_transp_ZntB"/>
</dbReference>
<dbReference type="NCBIfam" id="NF007092">
    <property type="entry name" value="PRK09546.1"/>
    <property type="match status" value="1"/>
</dbReference>
<dbReference type="PANTHER" id="PTHR46494">
    <property type="entry name" value="CORA FAMILY METAL ION TRANSPORTER (EUROFUNG)"/>
    <property type="match status" value="1"/>
</dbReference>
<dbReference type="PANTHER" id="PTHR46494:SF3">
    <property type="entry name" value="ZINC TRANSPORT PROTEIN ZNTB"/>
    <property type="match status" value="1"/>
</dbReference>
<dbReference type="Pfam" id="PF01544">
    <property type="entry name" value="CorA"/>
    <property type="match status" value="1"/>
</dbReference>
<dbReference type="SUPFAM" id="SSF143865">
    <property type="entry name" value="CorA soluble domain-like"/>
    <property type="match status" value="1"/>
</dbReference>
<dbReference type="SUPFAM" id="SSF144083">
    <property type="entry name" value="Magnesium transport protein CorA, transmembrane region"/>
    <property type="match status" value="1"/>
</dbReference>
<keyword id="KW-0997">Cell inner membrane</keyword>
<keyword id="KW-1003">Cell membrane</keyword>
<keyword id="KW-0406">Ion transport</keyword>
<keyword id="KW-0472">Membrane</keyword>
<keyword id="KW-0812">Transmembrane</keyword>
<keyword id="KW-1133">Transmembrane helix</keyword>
<keyword id="KW-0813">Transport</keyword>
<keyword id="KW-0862">Zinc</keyword>